<sequence>MMILKIGGSVITDKSAYRTARTYAIRSIVKVLSGIEDLVCVVHGGGSFGHIKAMEFGLPGPKNPRSSIGYSIVHRDMENLDLMVIDAMIEMGMRPISVPISALRYDGRFDYTPLIRYIDAGFVPVSYGDVYIKDEHSYGIYSGDDIMADMAELLKPDVAVFLTDVDGIYSKDPKRNPDAVLLRDIDTNITFDRVQNDVTGGIGKKFESMVKMKSSVKNGVYLINGNHPERIGDIGKESFIGTVIR</sequence>
<dbReference type="EC" id="2.7.4.26"/>
<dbReference type="EMBL" id="AL445063">
    <property type="protein sequence ID" value="CAC11251.1"/>
    <property type="molecule type" value="Genomic_DNA"/>
</dbReference>
<dbReference type="RefSeq" id="WP_010900530.1">
    <property type="nucleotide sequence ID" value="NC_002578.1"/>
</dbReference>
<dbReference type="PDB" id="3LKK">
    <property type="method" value="X-ray"/>
    <property type="resolution" value="2.00 A"/>
    <property type="chains" value="A/B=1-245"/>
</dbReference>
<dbReference type="PDB" id="3LL5">
    <property type="method" value="X-ray"/>
    <property type="resolution" value="1.99 A"/>
    <property type="chains" value="A/B/C/D=1-245"/>
</dbReference>
<dbReference type="PDBsum" id="3LKK"/>
<dbReference type="PDBsum" id="3LL5"/>
<dbReference type="SMR" id="Q9HLX1"/>
<dbReference type="FunCoup" id="Q9HLX1">
    <property type="interactions" value="23"/>
</dbReference>
<dbReference type="STRING" id="273075.gene:9571318"/>
<dbReference type="PaxDb" id="273075-Ta0103"/>
<dbReference type="EnsemblBacteria" id="CAC11251">
    <property type="protein sequence ID" value="CAC11251"/>
    <property type="gene ID" value="CAC11251"/>
</dbReference>
<dbReference type="KEGG" id="tac:Ta0103"/>
<dbReference type="eggNOG" id="arCOG00860">
    <property type="taxonomic scope" value="Archaea"/>
</dbReference>
<dbReference type="HOGENOM" id="CLU_070213_0_0_2"/>
<dbReference type="InParanoid" id="Q9HLX1"/>
<dbReference type="OrthoDB" id="15328at2157"/>
<dbReference type="BioCyc" id="MetaCyc:MONOMER-18737"/>
<dbReference type="BRENDA" id="2.7.4.26">
    <property type="organism ID" value="6324"/>
</dbReference>
<dbReference type="EvolutionaryTrace" id="Q9HLX1"/>
<dbReference type="Proteomes" id="UP000001024">
    <property type="component" value="Chromosome"/>
</dbReference>
<dbReference type="GO" id="GO:0005829">
    <property type="term" value="C:cytosol"/>
    <property type="evidence" value="ECO:0007669"/>
    <property type="project" value="TreeGrafter"/>
</dbReference>
<dbReference type="GO" id="GO:0005524">
    <property type="term" value="F:ATP binding"/>
    <property type="evidence" value="ECO:0007669"/>
    <property type="project" value="UniProtKB-KW"/>
</dbReference>
<dbReference type="GO" id="GO:0102043">
    <property type="term" value="F:isopentenyl phosphate kinase activity"/>
    <property type="evidence" value="ECO:0007669"/>
    <property type="project" value="UniProtKB-EC"/>
</dbReference>
<dbReference type="GO" id="GO:0016301">
    <property type="term" value="F:kinase activity"/>
    <property type="evidence" value="ECO:0007669"/>
    <property type="project" value="UniProtKB-KW"/>
</dbReference>
<dbReference type="GO" id="GO:0016114">
    <property type="term" value="P:terpenoid biosynthetic process"/>
    <property type="evidence" value="ECO:0007669"/>
    <property type="project" value="TreeGrafter"/>
</dbReference>
<dbReference type="CDD" id="cd04241">
    <property type="entry name" value="AAK_FomA-like"/>
    <property type="match status" value="1"/>
</dbReference>
<dbReference type="Gene3D" id="3.40.1160.10">
    <property type="entry name" value="Acetylglutamate kinase-like"/>
    <property type="match status" value="1"/>
</dbReference>
<dbReference type="InterPro" id="IPR036393">
    <property type="entry name" value="AceGlu_kinase-like_sf"/>
</dbReference>
<dbReference type="InterPro" id="IPR001048">
    <property type="entry name" value="Asp/Glu/Uridylate_kinase"/>
</dbReference>
<dbReference type="InterPro" id="IPR024192">
    <property type="entry name" value="Fosfomycin_R_FomA-type"/>
</dbReference>
<dbReference type="NCBIfam" id="NF040647">
    <property type="entry name" value="IPPK_Arch"/>
    <property type="match status" value="1"/>
</dbReference>
<dbReference type="PANTHER" id="PTHR43654">
    <property type="entry name" value="GLUTAMATE 5-KINASE"/>
    <property type="match status" value="1"/>
</dbReference>
<dbReference type="PANTHER" id="PTHR43654:SF1">
    <property type="entry name" value="ISOPENTENYL PHOSPHATE KINASE"/>
    <property type="match status" value="1"/>
</dbReference>
<dbReference type="Pfam" id="PF00696">
    <property type="entry name" value="AA_kinase"/>
    <property type="match status" value="1"/>
</dbReference>
<dbReference type="PIRSF" id="PIRSF016496">
    <property type="entry name" value="Kin_FomA"/>
    <property type="match status" value="1"/>
</dbReference>
<dbReference type="SUPFAM" id="SSF53633">
    <property type="entry name" value="Carbamate kinase-like"/>
    <property type="match status" value="1"/>
</dbReference>
<organism>
    <name type="scientific">Thermoplasma acidophilum (strain ATCC 25905 / DSM 1728 / JCM 9062 / NBRC 15155 / AMRC-C165)</name>
    <dbReference type="NCBI Taxonomy" id="273075"/>
    <lineage>
        <taxon>Archaea</taxon>
        <taxon>Methanobacteriati</taxon>
        <taxon>Thermoplasmatota</taxon>
        <taxon>Thermoplasmata</taxon>
        <taxon>Thermoplasmatales</taxon>
        <taxon>Thermoplasmataceae</taxon>
        <taxon>Thermoplasma</taxon>
    </lineage>
</organism>
<reference key="1">
    <citation type="journal article" date="2000" name="Nature">
        <title>The genome sequence of the thermoacidophilic scavenger Thermoplasma acidophilum.</title>
        <authorList>
            <person name="Ruepp A."/>
            <person name="Graml W."/>
            <person name="Santos-Martinez M.-L."/>
            <person name="Koretke K.K."/>
            <person name="Volker C."/>
            <person name="Mewes H.-W."/>
            <person name="Frishman D."/>
            <person name="Stocker S."/>
            <person name="Lupas A.N."/>
            <person name="Baumeister W."/>
        </authorList>
    </citation>
    <scope>NUCLEOTIDE SEQUENCE [LARGE SCALE GENOMIC DNA]</scope>
    <source>
        <strain>ATCC 25905 / DSM 1728 / JCM 9062 / NBRC 15155 / AMRC-C165</strain>
    </source>
</reference>
<reference key="2">
    <citation type="journal article" date="2010" name="Biochemistry">
        <title>Characterization of thermophilic archaeal isopentenyl phosphate kinases.</title>
        <authorList>
            <person name="Chen M."/>
            <person name="Poulter C.D."/>
        </authorList>
    </citation>
    <scope>CATALYTIC ACTIVITY</scope>
    <scope>FUNCTION</scope>
    <scope>BIOPHYSICOCHEMICAL PROPERTIES</scope>
    <scope>SUBUNIT</scope>
    <scope>IDENTIFICATION BY MASS SPECTROMETRY</scope>
    <source>
        <strain>ATCC 25905 / DSM 1728 / JCM 9062 / NBRC 15155 / AMRC-C165</strain>
    </source>
</reference>
<reference key="3">
    <citation type="journal article" date="2010" name="ACS Chem. Biol.">
        <title>X-ray structures of isopentenyl phosphate kinase.</title>
        <authorList>
            <person name="Mabanglo M.F."/>
            <person name="Schubert H.L."/>
            <person name="Chen M."/>
            <person name="Hill C.P."/>
            <person name="Poulter C.D."/>
        </authorList>
    </citation>
    <scope>X-RAY CRYSTALLOGRAPHY (1.99 ANGSTROMS) IN COMPLEXES WITH ISOPENTENYL PHOSPHATE AND ATP</scope>
    <scope>SUBUNIT</scope>
</reference>
<evidence type="ECO:0000269" key="1">
    <source>
    </source>
</evidence>
<evidence type="ECO:0000269" key="2">
    <source>
    </source>
</evidence>
<evidence type="ECO:0000305" key="3"/>
<evidence type="ECO:0007829" key="4">
    <source>
        <dbReference type="PDB" id="3LL5"/>
    </source>
</evidence>
<keyword id="KW-0002">3D-structure</keyword>
<keyword id="KW-0067">ATP-binding</keyword>
<keyword id="KW-0414">Isoprene biosynthesis</keyword>
<keyword id="KW-0418">Kinase</keyword>
<keyword id="KW-0547">Nucleotide-binding</keyword>
<keyword id="KW-1185">Reference proteome</keyword>
<keyword id="KW-0808">Transferase</keyword>
<comment type="function">
    <text evidence="1">Catalyzes the formation of isopentenyl diphosphate (IPP), the building block of all isoprenoids. Has lower activity with isopentenyl thiolophosphate (ISP). Has low activity with dimethylallyl phosphate (DMAP), 1-butyl phosphate (BP) and 3-buten-1-yl phosphate (BEP). Has no significant activity with geranyl phosphate (in vitro).</text>
</comment>
<comment type="catalytic activity">
    <reaction evidence="1">
        <text>isopentenyl phosphate + ATP = isopentenyl diphosphate + ADP</text>
        <dbReference type="Rhea" id="RHEA:33963"/>
        <dbReference type="ChEBI" id="CHEBI:30616"/>
        <dbReference type="ChEBI" id="CHEBI:65078"/>
        <dbReference type="ChEBI" id="CHEBI:128769"/>
        <dbReference type="ChEBI" id="CHEBI:456216"/>
        <dbReference type="EC" id="2.7.4.26"/>
    </reaction>
</comment>
<comment type="biophysicochemical properties">
    <kinetics>
        <KM evidence="1">4.4 uM for isopentenyl phosphate</KM>
        <KM evidence="1">6 uM for ATP</KM>
    </kinetics>
    <phDependence>
        <text evidence="1">Optimum pH is 6.5-8.5.</text>
    </phDependence>
    <temperatureDependence>
        <text evidence="1">Optimum temperature is 70 degrees Celsius.</text>
    </temperatureDependence>
</comment>
<comment type="subunit">
    <text evidence="1 2">Homodimer.</text>
</comment>
<comment type="similarity">
    <text evidence="3">Belongs to the isopentenyl phosphate kinase family.</text>
</comment>
<name>IPK_THEAC</name>
<proteinExistence type="evidence at protein level"/>
<gene>
    <name type="ordered locus">Ta0103</name>
</gene>
<accession>Q9HLX1</accession>
<feature type="chain" id="PRO_0000424200" description="Isopentenyl phosphate kinase">
    <location>
        <begin position="1"/>
        <end position="245"/>
    </location>
</feature>
<feature type="binding site">
    <location>
        <begin position="5"/>
        <end position="9"/>
    </location>
    <ligand>
        <name>ATP</name>
        <dbReference type="ChEBI" id="CHEBI:30616"/>
    </ligand>
</feature>
<feature type="binding site">
    <location>
        <position position="45"/>
    </location>
    <ligand>
        <name>substrate</name>
    </ligand>
</feature>
<feature type="binding site">
    <location>
        <position position="46"/>
    </location>
    <ligand>
        <name>ATP</name>
        <dbReference type="ChEBI" id="CHEBI:30616"/>
    </ligand>
</feature>
<feature type="binding site">
    <location>
        <position position="50"/>
    </location>
    <ligand>
        <name>substrate</name>
    </ligand>
</feature>
<feature type="binding site">
    <location>
        <position position="143"/>
    </location>
    <ligand>
        <name>substrate</name>
    </ligand>
</feature>
<feature type="binding site">
    <location>
        <position position="164"/>
    </location>
    <ligand>
        <name>ATP</name>
        <dbReference type="ChEBI" id="CHEBI:30616"/>
    </ligand>
</feature>
<feature type="binding site">
    <location>
        <begin position="169"/>
        <end position="174"/>
    </location>
    <ligand>
        <name>ATP</name>
        <dbReference type="ChEBI" id="CHEBI:30616"/>
    </ligand>
</feature>
<feature type="binding site">
    <location>
        <position position="201"/>
    </location>
    <ligand>
        <name>ATP</name>
        <dbReference type="ChEBI" id="CHEBI:30616"/>
    </ligand>
</feature>
<feature type="binding site">
    <location>
        <position position="205"/>
    </location>
    <ligand>
        <name>ATP</name>
        <dbReference type="ChEBI" id="CHEBI:30616"/>
    </ligand>
</feature>
<feature type="site" description="Transition state stabilizer">
    <location>
        <position position="14"/>
    </location>
</feature>
<feature type="strand" evidence="4">
    <location>
        <begin position="2"/>
        <end position="6"/>
    </location>
</feature>
<feature type="helix" evidence="4">
    <location>
        <begin position="8"/>
        <end position="11"/>
    </location>
</feature>
<feature type="helix" evidence="4">
    <location>
        <begin position="22"/>
        <end position="33"/>
    </location>
</feature>
<feature type="strand" evidence="4">
    <location>
        <begin position="38"/>
        <end position="43"/>
    </location>
</feature>
<feature type="helix" evidence="4">
    <location>
        <begin position="46"/>
        <end position="48"/>
    </location>
</feature>
<feature type="helix" evidence="4">
    <location>
        <begin position="50"/>
        <end position="56"/>
    </location>
</feature>
<feature type="strand" evidence="4">
    <location>
        <begin position="59"/>
        <end position="61"/>
    </location>
</feature>
<feature type="helix" evidence="4">
    <location>
        <begin position="64"/>
        <end position="90"/>
    </location>
</feature>
<feature type="strand" evidence="4">
    <location>
        <begin position="95"/>
        <end position="97"/>
    </location>
</feature>
<feature type="helix" evidence="4">
    <location>
        <begin position="100"/>
        <end position="102"/>
    </location>
</feature>
<feature type="strand" evidence="4">
    <location>
        <begin position="105"/>
        <end position="109"/>
    </location>
</feature>
<feature type="helix" evidence="4">
    <location>
        <begin position="112"/>
        <end position="119"/>
    </location>
</feature>
<feature type="strand" evidence="4">
    <location>
        <begin position="123"/>
        <end position="127"/>
    </location>
</feature>
<feature type="strand" evidence="4">
    <location>
        <begin position="129"/>
        <end position="134"/>
    </location>
</feature>
<feature type="strand" evidence="4">
    <location>
        <begin position="137"/>
        <end position="141"/>
    </location>
</feature>
<feature type="helix" evidence="4">
    <location>
        <begin position="143"/>
        <end position="154"/>
    </location>
</feature>
<feature type="strand" evidence="4">
    <location>
        <begin position="157"/>
        <end position="167"/>
    </location>
</feature>
<feature type="strand" evidence="4">
    <location>
        <begin position="169"/>
        <end position="171"/>
    </location>
</feature>
<feature type="turn" evidence="4">
    <location>
        <begin position="173"/>
        <end position="175"/>
    </location>
</feature>
<feature type="strand" evidence="4">
    <location>
        <begin position="184"/>
        <end position="186"/>
    </location>
</feature>
<feature type="helix" evidence="4">
    <location>
        <begin position="203"/>
        <end position="213"/>
    </location>
</feature>
<feature type="strand" evidence="4">
    <location>
        <begin position="220"/>
        <end position="224"/>
    </location>
</feature>
<feature type="helix" evidence="4">
    <location>
        <begin position="228"/>
        <end position="233"/>
    </location>
</feature>
<feature type="strand" evidence="4">
    <location>
        <begin position="241"/>
        <end position="245"/>
    </location>
</feature>
<protein>
    <recommendedName>
        <fullName>Isopentenyl phosphate kinase</fullName>
        <shortName>IPK</shortName>
        <ecNumber>2.7.4.26</ecNumber>
    </recommendedName>
</protein>